<keyword id="KW-0963">Cytoplasm</keyword>
<keyword id="KW-0378">Hydrolase</keyword>
<keyword id="KW-0479">Metal-binding</keyword>
<keyword id="KW-0539">Nucleus</keyword>
<keyword id="KW-1185">Reference proteome</keyword>
<keyword id="KW-0862">Zinc</keyword>
<reference key="1">
    <citation type="journal article" date="2005" name="Nature">
        <title>The genome of the social amoeba Dictyostelium discoideum.</title>
        <authorList>
            <person name="Eichinger L."/>
            <person name="Pachebat J.A."/>
            <person name="Gloeckner G."/>
            <person name="Rajandream M.A."/>
            <person name="Sucgang R."/>
            <person name="Berriman M."/>
            <person name="Song J."/>
            <person name="Olsen R."/>
            <person name="Szafranski K."/>
            <person name="Xu Q."/>
            <person name="Tunggal B."/>
            <person name="Kummerfeld S."/>
            <person name="Madera M."/>
            <person name="Konfortov B.A."/>
            <person name="Rivero F."/>
            <person name="Bankier A.T."/>
            <person name="Lehmann R."/>
            <person name="Hamlin N."/>
            <person name="Davies R."/>
            <person name="Gaudet P."/>
            <person name="Fey P."/>
            <person name="Pilcher K."/>
            <person name="Chen G."/>
            <person name="Saunders D."/>
            <person name="Sodergren E.J."/>
            <person name="Davis P."/>
            <person name="Kerhornou A."/>
            <person name="Nie X."/>
            <person name="Hall N."/>
            <person name="Anjard C."/>
            <person name="Hemphill L."/>
            <person name="Bason N."/>
            <person name="Farbrother P."/>
            <person name="Desany B."/>
            <person name="Just E."/>
            <person name="Morio T."/>
            <person name="Rost R."/>
            <person name="Churcher C.M."/>
            <person name="Cooper J."/>
            <person name="Haydock S."/>
            <person name="van Driessche N."/>
            <person name="Cronin A."/>
            <person name="Goodhead I."/>
            <person name="Muzny D.M."/>
            <person name="Mourier T."/>
            <person name="Pain A."/>
            <person name="Lu M."/>
            <person name="Harper D."/>
            <person name="Lindsay R."/>
            <person name="Hauser H."/>
            <person name="James K.D."/>
            <person name="Quiles M."/>
            <person name="Madan Babu M."/>
            <person name="Saito T."/>
            <person name="Buchrieser C."/>
            <person name="Wardroper A."/>
            <person name="Felder M."/>
            <person name="Thangavelu M."/>
            <person name="Johnson D."/>
            <person name="Knights A."/>
            <person name="Loulseged H."/>
            <person name="Mungall K.L."/>
            <person name="Oliver K."/>
            <person name="Price C."/>
            <person name="Quail M.A."/>
            <person name="Urushihara H."/>
            <person name="Hernandez J."/>
            <person name="Rabbinowitsch E."/>
            <person name="Steffen D."/>
            <person name="Sanders M."/>
            <person name="Ma J."/>
            <person name="Kohara Y."/>
            <person name="Sharp S."/>
            <person name="Simmonds M.N."/>
            <person name="Spiegler S."/>
            <person name="Tivey A."/>
            <person name="Sugano S."/>
            <person name="White B."/>
            <person name="Walker D."/>
            <person name="Woodward J.R."/>
            <person name="Winckler T."/>
            <person name="Tanaka Y."/>
            <person name="Shaulsky G."/>
            <person name="Schleicher M."/>
            <person name="Weinstock G.M."/>
            <person name="Rosenthal A."/>
            <person name="Cox E.C."/>
            <person name="Chisholm R.L."/>
            <person name="Gibbs R.A."/>
            <person name="Loomis W.F."/>
            <person name="Platzer M."/>
            <person name="Kay R.R."/>
            <person name="Williams J.G."/>
            <person name="Dear P.H."/>
            <person name="Noegel A.A."/>
            <person name="Barrell B.G."/>
            <person name="Kuspa A."/>
        </authorList>
    </citation>
    <scope>NUCLEOTIDE SEQUENCE [LARGE SCALE GENOMIC DNA]</scope>
    <source>
        <strain>AX4</strain>
    </source>
</reference>
<accession>Q54YL3</accession>
<name>INT11_DICDI</name>
<dbReference type="EC" id="3.1.27.-"/>
<dbReference type="EMBL" id="AAFI02000023">
    <property type="protein sequence ID" value="EAL68267.1"/>
    <property type="molecule type" value="Genomic_DNA"/>
</dbReference>
<dbReference type="RefSeq" id="XP_642189.1">
    <property type="nucleotide sequence ID" value="XM_637097.1"/>
</dbReference>
<dbReference type="SMR" id="Q54YL3"/>
<dbReference type="FunCoup" id="Q54YL3">
    <property type="interactions" value="497"/>
</dbReference>
<dbReference type="STRING" id="44689.Q54YL3"/>
<dbReference type="PaxDb" id="44689-DDB0234100"/>
<dbReference type="EnsemblProtists" id="EAL68267">
    <property type="protein sequence ID" value="EAL68267"/>
    <property type="gene ID" value="DDB_G0278189"/>
</dbReference>
<dbReference type="GeneID" id="8621396"/>
<dbReference type="KEGG" id="ddi:DDB_G0278189"/>
<dbReference type="dictyBase" id="DDB_G0278189">
    <property type="gene designation" value="ints11"/>
</dbReference>
<dbReference type="VEuPathDB" id="AmoebaDB:DDB_G0278189"/>
<dbReference type="eggNOG" id="KOG1136">
    <property type="taxonomic scope" value="Eukaryota"/>
</dbReference>
<dbReference type="HOGENOM" id="CLU_009673_3_1_1"/>
<dbReference type="InParanoid" id="Q54YL3"/>
<dbReference type="OMA" id="DCGAHCG"/>
<dbReference type="PhylomeDB" id="Q54YL3"/>
<dbReference type="Reactome" id="R-DDI-6807505">
    <property type="pathway name" value="RNA polymerase II transcribes snRNA genes"/>
</dbReference>
<dbReference type="PRO" id="PR:Q54YL3"/>
<dbReference type="Proteomes" id="UP000002195">
    <property type="component" value="Chromosome 3"/>
</dbReference>
<dbReference type="GO" id="GO:0005737">
    <property type="term" value="C:cytoplasm"/>
    <property type="evidence" value="ECO:0000250"/>
    <property type="project" value="UniProtKB"/>
</dbReference>
<dbReference type="GO" id="GO:0160232">
    <property type="term" value="C:INTAC complex"/>
    <property type="evidence" value="ECO:0000250"/>
    <property type="project" value="UniProtKB"/>
</dbReference>
<dbReference type="GO" id="GO:0032039">
    <property type="term" value="C:integrator complex"/>
    <property type="evidence" value="ECO:0000250"/>
    <property type="project" value="UniProtKB"/>
</dbReference>
<dbReference type="GO" id="GO:0005634">
    <property type="term" value="C:nucleus"/>
    <property type="evidence" value="ECO:0000250"/>
    <property type="project" value="UniProtKB"/>
</dbReference>
<dbReference type="GO" id="GO:0004521">
    <property type="term" value="F:RNA endonuclease activity"/>
    <property type="evidence" value="ECO:0000250"/>
    <property type="project" value="UniProtKB"/>
</dbReference>
<dbReference type="GO" id="GO:0160240">
    <property type="term" value="P:RNA polymerase II transcription initiation surveillance"/>
    <property type="evidence" value="ECO:0000250"/>
    <property type="project" value="UniProtKB"/>
</dbReference>
<dbReference type="GO" id="GO:0016180">
    <property type="term" value="P:snRNA processing"/>
    <property type="evidence" value="ECO:0000318"/>
    <property type="project" value="GO_Central"/>
</dbReference>
<dbReference type="CDD" id="cd16291">
    <property type="entry name" value="INTS11-like_MBL-fold"/>
    <property type="match status" value="1"/>
</dbReference>
<dbReference type="FunFam" id="3.40.50.10890:FF:000002">
    <property type="entry name" value="Integrator complex subunit 11"/>
    <property type="match status" value="1"/>
</dbReference>
<dbReference type="FunFam" id="3.60.15.10:FF:000028">
    <property type="entry name" value="Integrator complex subunit 11 isoform X3"/>
    <property type="match status" value="1"/>
</dbReference>
<dbReference type="Gene3D" id="3.40.50.10890">
    <property type="match status" value="1"/>
</dbReference>
<dbReference type="Gene3D" id="3.60.15.10">
    <property type="entry name" value="Ribonuclease Z/Hydroxyacylglutathione hydrolase-like"/>
    <property type="match status" value="1"/>
</dbReference>
<dbReference type="InterPro" id="IPR022712">
    <property type="entry name" value="Beta_Casp"/>
</dbReference>
<dbReference type="InterPro" id="IPR041897">
    <property type="entry name" value="INTS11-like_MBL-fold"/>
</dbReference>
<dbReference type="InterPro" id="IPR050698">
    <property type="entry name" value="MBL"/>
</dbReference>
<dbReference type="InterPro" id="IPR001279">
    <property type="entry name" value="Metallo-B-lactamas"/>
</dbReference>
<dbReference type="InterPro" id="IPR036866">
    <property type="entry name" value="RibonucZ/Hydroxyglut_hydro"/>
</dbReference>
<dbReference type="InterPro" id="IPR011108">
    <property type="entry name" value="RMMBL"/>
</dbReference>
<dbReference type="PANTHER" id="PTHR11203">
    <property type="entry name" value="CLEAVAGE AND POLYADENYLATION SPECIFICITY FACTOR FAMILY MEMBER"/>
    <property type="match status" value="1"/>
</dbReference>
<dbReference type="PANTHER" id="PTHR11203:SF37">
    <property type="entry name" value="INTEGRATOR COMPLEX SUBUNIT 11"/>
    <property type="match status" value="1"/>
</dbReference>
<dbReference type="Pfam" id="PF10996">
    <property type="entry name" value="Beta-Casp"/>
    <property type="match status" value="1"/>
</dbReference>
<dbReference type="Pfam" id="PF16661">
    <property type="entry name" value="Lactamase_B_6"/>
    <property type="match status" value="1"/>
</dbReference>
<dbReference type="Pfam" id="PF07521">
    <property type="entry name" value="RMMBL"/>
    <property type="match status" value="1"/>
</dbReference>
<dbReference type="SMART" id="SM01027">
    <property type="entry name" value="Beta-Casp"/>
    <property type="match status" value="1"/>
</dbReference>
<dbReference type="SMART" id="SM00849">
    <property type="entry name" value="Lactamase_B"/>
    <property type="match status" value="1"/>
</dbReference>
<dbReference type="SUPFAM" id="SSF56281">
    <property type="entry name" value="Metallo-hydrolase/oxidoreductase"/>
    <property type="match status" value="1"/>
</dbReference>
<evidence type="ECO:0000250" key="1">
    <source>
        <dbReference type="UniProtKB" id="Q5TA45"/>
    </source>
</evidence>
<evidence type="ECO:0000256" key="2">
    <source>
        <dbReference type="SAM" id="MobiDB-lite"/>
    </source>
</evidence>
<evidence type="ECO:0000305" key="3"/>
<proteinExistence type="inferred from homology"/>
<gene>
    <name type="primary">ints11</name>
    <name type="ORF">DDB_G0278189</name>
</gene>
<feature type="chain" id="PRO_0000344382" description="Integrator complex subunit 11 homolog">
    <location>
        <begin position="1"/>
        <end position="744"/>
    </location>
</feature>
<feature type="region of interest" description="Disordered" evidence="2">
    <location>
        <begin position="626"/>
        <end position="669"/>
    </location>
</feature>
<feature type="short sequence motif" description="HXHXDH motif">
    <location>
        <begin position="67"/>
        <end position="72"/>
    </location>
</feature>
<feature type="active site" evidence="1">
    <location>
        <position position="202"/>
    </location>
</feature>
<feature type="binding site" evidence="1">
    <location>
        <position position="67"/>
    </location>
    <ligand>
        <name>Zn(2+)</name>
        <dbReference type="ChEBI" id="CHEBI:29105"/>
        <label>1</label>
    </ligand>
</feature>
<feature type="binding site" evidence="1">
    <location>
        <position position="69"/>
    </location>
    <ligand>
        <name>Zn(2+)</name>
        <dbReference type="ChEBI" id="CHEBI:29105"/>
        <label>1</label>
    </ligand>
</feature>
<feature type="binding site" evidence="1">
    <location>
        <position position="71"/>
    </location>
    <ligand>
        <name>Zn(2+)</name>
        <dbReference type="ChEBI" id="CHEBI:29105"/>
        <label>2</label>
    </ligand>
</feature>
<feature type="binding site" evidence="1">
    <location>
        <position position="72"/>
    </location>
    <ligand>
        <name>Zn(2+)</name>
        <dbReference type="ChEBI" id="CHEBI:29105"/>
        <label>2</label>
    </ligand>
</feature>
<feature type="binding site" evidence="1">
    <location>
        <position position="156"/>
    </location>
    <ligand>
        <name>Zn(2+)</name>
        <dbReference type="ChEBI" id="CHEBI:29105"/>
        <label>1</label>
    </ligand>
</feature>
<feature type="binding site" evidence="1">
    <location>
        <position position="177"/>
    </location>
    <ligand>
        <name>Zn(2+)</name>
        <dbReference type="ChEBI" id="CHEBI:29105"/>
        <label>1</label>
    </ligand>
</feature>
<feature type="binding site" evidence="1">
    <location>
        <position position="177"/>
    </location>
    <ligand>
        <name>Zn(2+)</name>
        <dbReference type="ChEBI" id="CHEBI:29105"/>
        <label>2</label>
    </ligand>
</feature>
<feature type="binding site" evidence="1">
    <location>
        <position position="425"/>
    </location>
    <ligand>
        <name>Zn(2+)</name>
        <dbReference type="ChEBI" id="CHEBI:29105"/>
        <label>2</label>
    </ligand>
</feature>
<protein>
    <recommendedName>
        <fullName>Integrator complex subunit 11 homolog</fullName>
        <ecNumber>3.1.27.-</ecNumber>
    </recommendedName>
</protein>
<organism>
    <name type="scientific">Dictyostelium discoideum</name>
    <name type="common">Social amoeba</name>
    <dbReference type="NCBI Taxonomy" id="44689"/>
    <lineage>
        <taxon>Eukaryota</taxon>
        <taxon>Amoebozoa</taxon>
        <taxon>Evosea</taxon>
        <taxon>Eumycetozoa</taxon>
        <taxon>Dictyostelia</taxon>
        <taxon>Dictyosteliales</taxon>
        <taxon>Dictyosteliaceae</taxon>
        <taxon>Dictyostelium</taxon>
    </lineage>
</organism>
<comment type="function">
    <text evidence="1">RNA endonuclease component of the integrator complex, a multiprotein complex that terminates RNA polymerase II (Pol II) transcription in the promoter-proximal region of genes. The integrator complex provides a quality checkpoint during transcription elongation by driving premature transcription termination of transcripts that are unfavorably configured for transcriptional elongation: the complex terminates transcription by (1) catalyzing dephosphorylation of the C-terminal domain (CTD) of Pol II subunit polr2a, (2) degrading the exiting nascent RNA transcript via endonuclease activity and (3) promoting the release of Pol II from bound DNA. The integrator complex is also involved in terminating the synthesis of non-coding Pol II transcripts, such as enhancer RNAs (eRNAs), small nuclear RNAs (snRNAs), telomerase RNAs and long non-coding RNAs (lncRNAs). Within the integrator complex, INTS11 constitutes the RNA endonuclease subunit that degrades exiting nascent RNA transcripts.</text>
</comment>
<comment type="cofactor">
    <cofactor evidence="1">
        <name>Zn(2+)</name>
        <dbReference type="ChEBI" id="CHEBI:29105"/>
    </cofactor>
</comment>
<comment type="subunit">
    <text evidence="1">Component of the Integrator complex. The core complex associates with protein phosphatase 2A subunits, to form the Integrator-PP2A (INTAC) complex.</text>
</comment>
<comment type="subcellular location">
    <subcellularLocation>
        <location evidence="1">Nucleus</location>
    </subcellularLocation>
    <subcellularLocation>
        <location evidence="1">Cytoplasm</location>
    </subcellularLocation>
</comment>
<comment type="similarity">
    <text evidence="3">Belongs to the metallo-beta-lactamase superfamily. RNA-metabolizing metallo-beta-lactamase-like family. INTS11 subfamily.</text>
</comment>
<sequence>MTIKVVPLGAGQDVGRSCVIVTIGNKNIMFDCGMHMGMNDARRFPDFSYISKNGQFTKVIDCVIITHFHLDHCGALPFFTEMCGYDGPIYMTLPTKAICPILLEDYRKITVEKKGETNFFTAQMIKDCMKKVIPVNLHQTIKVDEELSIKAYYAGHVLGAAMFYAKVGDESVVYTGDYNMTPDRHLGSAWIDQVKPDVLITETTYATTIRDSKRGRERDFLKRIHECVEKGGKVLIPVFALGRVQELCILIDSYWEQMNLGHIPIYFSAGLAEKANLYYKLFINWTNQKIKQTFVKRNMFDFKHIKPFQSHLVDAPGAMVLFATPGMLHAGASLEVFKKWAPNELNMTIIPGYCVVGTVGNKLLTTGSDQQQQSKPQSQMVEIDKKTTIEVKCKIHNLSFSAHADAKGILQLIKMSNPRNVILVHGEKEKMGFLSQKIIKEMGVNCYYPANGVTIIIDTMKSIPIDISLNLLKRQILDYSYQYNNNNLNNFNNFNNLNNLNNNNNNNNNNSLKLIDIKNNTSTLFINNNNNNKKKQQSVVVVEESEENQDNNLIEEESFISSNNLLKKARLPISTIPIQGLMVSKQDQSSSSSNSNQLKLLGMNEVSKELSIKEIEMQYSLNLNFNNNTSDDNNNNNNNNNNNNNNNNNNNNNNNNNNNNNNNNNNNNNDNISLNFEFLTNELQRLLPIGINIERLEDSFFKPISLKIKSVSIQHISNMNIVVKWLHKDENLATHIISILKSIN</sequence>